<gene>
    <name evidence="1" type="primary">pheT</name>
    <name type="ordered locus">MK0820</name>
</gene>
<keyword id="KW-0030">Aminoacyl-tRNA synthetase</keyword>
<keyword id="KW-0067">ATP-binding</keyword>
<keyword id="KW-0963">Cytoplasm</keyword>
<keyword id="KW-0436">Ligase</keyword>
<keyword id="KW-0460">Magnesium</keyword>
<keyword id="KW-0479">Metal-binding</keyword>
<keyword id="KW-0547">Nucleotide-binding</keyword>
<keyword id="KW-0648">Protein biosynthesis</keyword>
<keyword id="KW-1185">Reference proteome</keyword>
<proteinExistence type="inferred from homology"/>
<dbReference type="EC" id="6.1.1.20" evidence="1"/>
<dbReference type="EMBL" id="AE009439">
    <property type="protein sequence ID" value="AAM02033.1"/>
    <property type="molecule type" value="Genomic_DNA"/>
</dbReference>
<dbReference type="SMR" id="Q8TX56"/>
<dbReference type="FunCoup" id="Q8TX56">
    <property type="interactions" value="226"/>
</dbReference>
<dbReference type="STRING" id="190192.MK0820"/>
<dbReference type="PaxDb" id="190192-MK0820"/>
<dbReference type="EnsemblBacteria" id="AAM02033">
    <property type="protein sequence ID" value="AAM02033"/>
    <property type="gene ID" value="MK0820"/>
</dbReference>
<dbReference type="KEGG" id="mka:MK0820"/>
<dbReference type="PATRIC" id="fig|190192.8.peg.862"/>
<dbReference type="HOGENOM" id="CLU_020279_3_0_2"/>
<dbReference type="InParanoid" id="Q8TX56"/>
<dbReference type="OrthoDB" id="10073at2157"/>
<dbReference type="Proteomes" id="UP000001826">
    <property type="component" value="Chromosome"/>
</dbReference>
<dbReference type="GO" id="GO:0009328">
    <property type="term" value="C:phenylalanine-tRNA ligase complex"/>
    <property type="evidence" value="ECO:0007669"/>
    <property type="project" value="TreeGrafter"/>
</dbReference>
<dbReference type="GO" id="GO:0005524">
    <property type="term" value="F:ATP binding"/>
    <property type="evidence" value="ECO:0007669"/>
    <property type="project" value="UniProtKB-UniRule"/>
</dbReference>
<dbReference type="GO" id="GO:0000287">
    <property type="term" value="F:magnesium ion binding"/>
    <property type="evidence" value="ECO:0007669"/>
    <property type="project" value="InterPro"/>
</dbReference>
<dbReference type="GO" id="GO:0004826">
    <property type="term" value="F:phenylalanine-tRNA ligase activity"/>
    <property type="evidence" value="ECO:0007669"/>
    <property type="project" value="UniProtKB-UniRule"/>
</dbReference>
<dbReference type="GO" id="GO:0003723">
    <property type="term" value="F:RNA binding"/>
    <property type="evidence" value="ECO:0007669"/>
    <property type="project" value="InterPro"/>
</dbReference>
<dbReference type="GO" id="GO:0006432">
    <property type="term" value="P:phenylalanyl-tRNA aminoacylation"/>
    <property type="evidence" value="ECO:0007669"/>
    <property type="project" value="UniProtKB-UniRule"/>
</dbReference>
<dbReference type="CDD" id="cd00769">
    <property type="entry name" value="PheRS_beta_core"/>
    <property type="match status" value="1"/>
</dbReference>
<dbReference type="Gene3D" id="3.30.56.10">
    <property type="match status" value="2"/>
</dbReference>
<dbReference type="Gene3D" id="3.30.930.10">
    <property type="entry name" value="Bira Bifunctional Protein, Domain 2"/>
    <property type="match status" value="1"/>
</dbReference>
<dbReference type="Gene3D" id="3.50.40.10">
    <property type="entry name" value="Phenylalanyl-trna Synthetase, Chain B, domain 3"/>
    <property type="match status" value="1"/>
</dbReference>
<dbReference type="HAMAP" id="MF_00284">
    <property type="entry name" value="Phe_tRNA_synth_beta2"/>
    <property type="match status" value="1"/>
</dbReference>
<dbReference type="InterPro" id="IPR045864">
    <property type="entry name" value="aa-tRNA-synth_II/BPL/LPL"/>
</dbReference>
<dbReference type="InterPro" id="IPR005146">
    <property type="entry name" value="B3/B4_tRNA-bd"/>
</dbReference>
<dbReference type="InterPro" id="IPR009061">
    <property type="entry name" value="DNA-bd_dom_put_sf"/>
</dbReference>
<dbReference type="InterPro" id="IPR045060">
    <property type="entry name" value="Phe-tRNA-ligase_IIc_bsu"/>
</dbReference>
<dbReference type="InterPro" id="IPR004531">
    <property type="entry name" value="Phe-tRNA-synth_IIc_bsu_arc_euk"/>
</dbReference>
<dbReference type="InterPro" id="IPR020825">
    <property type="entry name" value="Phe-tRNA_synthase-like_B3/B4"/>
</dbReference>
<dbReference type="InterPro" id="IPR022918">
    <property type="entry name" value="Phe_tRNA_ligase_beta2_arc"/>
</dbReference>
<dbReference type="InterPro" id="IPR041616">
    <property type="entry name" value="PheRS_beta_core"/>
</dbReference>
<dbReference type="InterPro" id="IPR005147">
    <property type="entry name" value="tRNA_synthase_B5-dom"/>
</dbReference>
<dbReference type="NCBIfam" id="TIGR00471">
    <property type="entry name" value="pheT_arch"/>
    <property type="match status" value="1"/>
</dbReference>
<dbReference type="PANTHER" id="PTHR10947:SF0">
    <property type="entry name" value="PHENYLALANINE--TRNA LIGASE BETA SUBUNIT"/>
    <property type="match status" value="1"/>
</dbReference>
<dbReference type="PANTHER" id="PTHR10947">
    <property type="entry name" value="PHENYLALANYL-TRNA SYNTHETASE BETA CHAIN AND LEUCINE-RICH REPEAT-CONTAINING PROTEIN 47"/>
    <property type="match status" value="1"/>
</dbReference>
<dbReference type="Pfam" id="PF17759">
    <property type="entry name" value="tRNA_synthFbeta"/>
    <property type="match status" value="1"/>
</dbReference>
<dbReference type="SMART" id="SM00873">
    <property type="entry name" value="B3_4"/>
    <property type="match status" value="1"/>
</dbReference>
<dbReference type="SMART" id="SM00874">
    <property type="entry name" value="B5"/>
    <property type="match status" value="1"/>
</dbReference>
<dbReference type="SUPFAM" id="SSF55681">
    <property type="entry name" value="Class II aaRS and biotin synthetases"/>
    <property type="match status" value="1"/>
</dbReference>
<dbReference type="SUPFAM" id="SSF46955">
    <property type="entry name" value="Putative DNA-binding domain"/>
    <property type="match status" value="2"/>
</dbReference>
<dbReference type="PROSITE" id="PS51483">
    <property type="entry name" value="B5"/>
    <property type="match status" value="1"/>
</dbReference>
<comment type="catalytic activity">
    <reaction evidence="1">
        <text>tRNA(Phe) + L-phenylalanine + ATP = L-phenylalanyl-tRNA(Phe) + AMP + diphosphate + H(+)</text>
        <dbReference type="Rhea" id="RHEA:19413"/>
        <dbReference type="Rhea" id="RHEA-COMP:9668"/>
        <dbReference type="Rhea" id="RHEA-COMP:9699"/>
        <dbReference type="ChEBI" id="CHEBI:15378"/>
        <dbReference type="ChEBI" id="CHEBI:30616"/>
        <dbReference type="ChEBI" id="CHEBI:33019"/>
        <dbReference type="ChEBI" id="CHEBI:58095"/>
        <dbReference type="ChEBI" id="CHEBI:78442"/>
        <dbReference type="ChEBI" id="CHEBI:78531"/>
        <dbReference type="ChEBI" id="CHEBI:456215"/>
        <dbReference type="EC" id="6.1.1.20"/>
    </reaction>
</comment>
<comment type="cofactor">
    <cofactor evidence="1">
        <name>Mg(2+)</name>
        <dbReference type="ChEBI" id="CHEBI:18420"/>
    </cofactor>
</comment>
<comment type="subunit">
    <text evidence="1">Tetramer of two alpha and two beta subunits.</text>
</comment>
<comment type="subcellular location">
    <subcellularLocation>
        <location evidence="1">Cytoplasm</location>
    </subcellularLocation>
</comment>
<comment type="similarity">
    <text evidence="1 2">Belongs to the phenylalanyl-tRNA synthetase beta subunit family. Type 2 subfamily.</text>
</comment>
<name>SYFB_METKA</name>
<organism>
    <name type="scientific">Methanopyrus kandleri (strain AV19 / DSM 6324 / JCM 9639 / NBRC 100938)</name>
    <dbReference type="NCBI Taxonomy" id="190192"/>
    <lineage>
        <taxon>Archaea</taxon>
        <taxon>Methanobacteriati</taxon>
        <taxon>Methanobacteriota</taxon>
        <taxon>Methanomada group</taxon>
        <taxon>Methanopyri</taxon>
        <taxon>Methanopyrales</taxon>
        <taxon>Methanopyraceae</taxon>
        <taxon>Methanopyrus</taxon>
    </lineage>
</organism>
<reference key="1">
    <citation type="journal article" date="2002" name="Proc. Natl. Acad. Sci. U.S.A.">
        <title>The complete genome of hyperthermophile Methanopyrus kandleri AV19 and monophyly of archaeal methanogens.</title>
        <authorList>
            <person name="Slesarev A.I."/>
            <person name="Mezhevaya K.V."/>
            <person name="Makarova K.S."/>
            <person name="Polushin N.N."/>
            <person name="Shcherbinina O.V."/>
            <person name="Shakhova V.V."/>
            <person name="Belova G.I."/>
            <person name="Aravind L."/>
            <person name="Natale D.A."/>
            <person name="Rogozin I.B."/>
            <person name="Tatusov R.L."/>
            <person name="Wolf Y.I."/>
            <person name="Stetter K.O."/>
            <person name="Malykh A.G."/>
            <person name="Koonin E.V."/>
            <person name="Kozyavkin S.A."/>
        </authorList>
    </citation>
    <scope>NUCLEOTIDE SEQUENCE [LARGE SCALE GENOMIC DNA]</scope>
    <source>
        <strain>AV19 / DSM 6324 / JCM 9639 / NBRC 100938</strain>
    </source>
</reference>
<evidence type="ECO:0000255" key="1">
    <source>
        <dbReference type="HAMAP-Rule" id="MF_00284"/>
    </source>
</evidence>
<evidence type="ECO:0000305" key="2"/>
<protein>
    <recommendedName>
        <fullName evidence="1">Phenylalanine--tRNA ligase beta subunit</fullName>
        <ecNumber evidence="1">6.1.1.20</ecNumber>
    </recommendedName>
    <alternativeName>
        <fullName evidence="1">Phenylalanyl-tRNA synthetase beta subunit</fullName>
        <shortName evidence="1">PheRS</shortName>
    </alternativeName>
</protein>
<sequence>MPVVTIHYDKLVKILGREVSFEELAHNLIPMLGSDVERIDEREMVIETEFFPNRPDLYSVEGVARALKGFLGIETGIPEYNVRRSDVEARVEESVLDARPCLAVAVVRGVEFEDERDLEHLMEFQEHLHWVIGRDRKKAAIGIHDFEAVEPPLRYFLADPNDRSWAFEPLDHPGEEMTPAEVLRRHEKGRQYAHLVSDGAPILADEEGVISFPPVINSERTRVTQDTTDLLIDVTGTDWRSVLDALHVIVCNLAERGAEILTVEILGAYERTTPTMELDVWDVPVSEARKLLGIDLSGEQLEELLERARHGAIFVPEGERELREYPLPDVYHIEADWREIPPILYEEDVVRVFVGPRRTNILHEWDLIEDAGIMYNYDRFEPTVPDFYTPSRADREREFINVVRDTLARMKFVEVNSLTLISPEENYRKMRLEPDGRAVKLANPIQKEYTIVRTWILPSLMRFLADNKHRPYPQRVFELGEVIERDEDAETGAKDRWKLALAIAGPGVGFSEIKSVVEALLRELDVTGWEITERKHRSFINGRCAAVLADGRELGFFGEIHPEVLTEFDLEVPVVGGEFDVAALRTAAGW</sequence>
<accession>Q8TX56</accession>
<feature type="chain" id="PRO_0000127003" description="Phenylalanine--tRNA ligase beta subunit">
    <location>
        <begin position="1"/>
        <end position="590"/>
    </location>
</feature>
<feature type="domain" description="B5" evidence="1">
    <location>
        <begin position="276"/>
        <end position="382"/>
    </location>
</feature>
<feature type="binding site" evidence="1">
    <location>
        <position position="360"/>
    </location>
    <ligand>
        <name>Mg(2+)</name>
        <dbReference type="ChEBI" id="CHEBI:18420"/>
        <note>shared with alpha subunit</note>
    </ligand>
</feature>
<feature type="binding site" evidence="1">
    <location>
        <position position="366"/>
    </location>
    <ligand>
        <name>Mg(2+)</name>
        <dbReference type="ChEBI" id="CHEBI:18420"/>
        <note>shared with alpha subunit</note>
    </ligand>
</feature>
<feature type="binding site" evidence="1">
    <location>
        <position position="369"/>
    </location>
    <ligand>
        <name>Mg(2+)</name>
        <dbReference type="ChEBI" id="CHEBI:18420"/>
        <note>shared with alpha subunit</note>
    </ligand>
</feature>
<feature type="binding site" evidence="1">
    <location>
        <position position="370"/>
    </location>
    <ligand>
        <name>Mg(2+)</name>
        <dbReference type="ChEBI" id="CHEBI:18420"/>
        <note>shared with alpha subunit</note>
    </ligand>
</feature>